<protein>
    <recommendedName>
        <fullName>SAGA complex subunit HFI1</fullName>
    </recommendedName>
    <alternativeName>
        <fullName evidence="16">General activator of nitrogen pathway genes protein 1</fullName>
    </alternativeName>
    <alternativeName>
        <fullName>Transcriptional coactivator HFI1/ADA1</fullName>
    </alternativeName>
</protein>
<proteinExistence type="evidence at protein level"/>
<name>HFI1_YEAST</name>
<dbReference type="EMBL" id="U76735">
    <property type="protein sequence ID" value="AAB58359.1"/>
    <property type="molecule type" value="Genomic_DNA"/>
</dbReference>
<dbReference type="EMBL" id="U41324">
    <property type="protein sequence ID" value="AAA84983.1"/>
    <property type="molecule type" value="Genomic_DNA"/>
</dbReference>
<dbReference type="EMBL" id="Z67751">
    <property type="protein sequence ID" value="CAA91590.1"/>
    <property type="molecule type" value="Genomic_DNA"/>
</dbReference>
<dbReference type="EMBL" id="Z73610">
    <property type="protein sequence ID" value="CAA97979.1"/>
    <property type="molecule type" value="Genomic_DNA"/>
</dbReference>
<dbReference type="EMBL" id="BK006949">
    <property type="protein sequence ID" value="DAA11183.1"/>
    <property type="molecule type" value="Genomic_DNA"/>
</dbReference>
<dbReference type="PIR" id="S61010">
    <property type="entry name" value="S61010"/>
</dbReference>
<dbReference type="RefSeq" id="NP_015069.1">
    <property type="nucleotide sequence ID" value="NM_001184068.1"/>
</dbReference>
<dbReference type="PDB" id="6T9I">
    <property type="method" value="EM"/>
    <property type="resolution" value="3.90 A"/>
    <property type="chains" value="H=1-488"/>
</dbReference>
<dbReference type="PDB" id="6T9K">
    <property type="method" value="EM"/>
    <property type="resolution" value="3.30 A"/>
    <property type="chains" value="H=1-488"/>
</dbReference>
<dbReference type="PDBsum" id="6T9I"/>
<dbReference type="PDBsum" id="6T9K"/>
<dbReference type="EMDB" id="EMD-10412"/>
<dbReference type="EMDB" id="EMD-10414"/>
<dbReference type="SMR" id="Q12060"/>
<dbReference type="BioGRID" id="35909">
    <property type="interactions" value="227"/>
</dbReference>
<dbReference type="ComplexPortal" id="CPX-656">
    <property type="entry name" value="SAGA complex"/>
</dbReference>
<dbReference type="ComplexPortal" id="CPX-675">
    <property type="entry name" value="SLIK (SAGA-like) complex"/>
</dbReference>
<dbReference type="DIP" id="DIP-955N"/>
<dbReference type="FunCoup" id="Q12060">
    <property type="interactions" value="1722"/>
</dbReference>
<dbReference type="IntAct" id="Q12060">
    <property type="interactions" value="103"/>
</dbReference>
<dbReference type="MINT" id="Q12060"/>
<dbReference type="STRING" id="4932.YPL254W"/>
<dbReference type="iPTMnet" id="Q12060"/>
<dbReference type="PaxDb" id="4932-YPL254W"/>
<dbReference type="PeptideAtlas" id="Q12060"/>
<dbReference type="EnsemblFungi" id="YPL254W_mRNA">
    <property type="protein sequence ID" value="YPL254W"/>
    <property type="gene ID" value="YPL254W"/>
</dbReference>
<dbReference type="GeneID" id="855821"/>
<dbReference type="KEGG" id="sce:YPL254W"/>
<dbReference type="AGR" id="SGD:S000006175"/>
<dbReference type="SGD" id="S000006175">
    <property type="gene designation" value="HFI1"/>
</dbReference>
<dbReference type="VEuPathDB" id="FungiDB:YPL254W"/>
<dbReference type="eggNOG" id="ENOG502RX84">
    <property type="taxonomic scope" value="Eukaryota"/>
</dbReference>
<dbReference type="GeneTree" id="ENSGT00390000011644"/>
<dbReference type="HOGENOM" id="CLU_033254_1_0_1"/>
<dbReference type="InParanoid" id="Q12060"/>
<dbReference type="OMA" id="NWLIKDI"/>
<dbReference type="OrthoDB" id="10264870at2759"/>
<dbReference type="BioCyc" id="YEAST:G3O-34139-MONOMER"/>
<dbReference type="BioGRID-ORCS" id="855821">
    <property type="hits" value="3 hits in 10 CRISPR screens"/>
</dbReference>
<dbReference type="PRO" id="PR:Q12060"/>
<dbReference type="Proteomes" id="UP000002311">
    <property type="component" value="Chromosome XVI"/>
</dbReference>
<dbReference type="RNAct" id="Q12060">
    <property type="molecule type" value="protein"/>
</dbReference>
<dbReference type="GO" id="GO:0005634">
    <property type="term" value="C:nucleus"/>
    <property type="evidence" value="ECO:0000303"/>
    <property type="project" value="ComplexPortal"/>
</dbReference>
<dbReference type="GO" id="GO:0000124">
    <property type="term" value="C:SAGA complex"/>
    <property type="evidence" value="ECO:0000314"/>
    <property type="project" value="SGD"/>
</dbReference>
<dbReference type="GO" id="GO:0046695">
    <property type="term" value="C:SLIK (SAGA-like) complex"/>
    <property type="evidence" value="ECO:0000314"/>
    <property type="project" value="SGD"/>
</dbReference>
<dbReference type="GO" id="GO:0003713">
    <property type="term" value="F:transcription coactivator activity"/>
    <property type="evidence" value="ECO:0000315"/>
    <property type="project" value="SGD"/>
</dbReference>
<dbReference type="GO" id="GO:0003712">
    <property type="term" value="F:transcription coregulator activity"/>
    <property type="evidence" value="ECO:0000315"/>
    <property type="project" value="SGD"/>
</dbReference>
<dbReference type="GO" id="GO:0006325">
    <property type="term" value="P:chromatin organization"/>
    <property type="evidence" value="ECO:0000314"/>
    <property type="project" value="SGD"/>
</dbReference>
<dbReference type="GO" id="GO:0006357">
    <property type="term" value="P:regulation of transcription by RNA polymerase II"/>
    <property type="evidence" value="ECO:0000314"/>
    <property type="project" value="ComplexPortal"/>
</dbReference>
<dbReference type="GO" id="GO:0006366">
    <property type="term" value="P:transcription by RNA polymerase II"/>
    <property type="evidence" value="ECO:0000315"/>
    <property type="project" value="SGD"/>
</dbReference>
<dbReference type="CDD" id="cd22933">
    <property type="entry name" value="HFD_HFI1"/>
    <property type="match status" value="1"/>
</dbReference>
<dbReference type="InterPro" id="IPR024738">
    <property type="entry name" value="Hfi1/Tada1"/>
</dbReference>
<dbReference type="PANTHER" id="PTHR21277">
    <property type="entry name" value="TRANSCRIPTIONAL ADAPTER 1"/>
    <property type="match status" value="1"/>
</dbReference>
<dbReference type="PANTHER" id="PTHR21277:SF5">
    <property type="entry name" value="TRANSCRIPTIONAL ADAPTER 1"/>
    <property type="match status" value="1"/>
</dbReference>
<dbReference type="Pfam" id="PF12767">
    <property type="entry name" value="SAGA-Tad1"/>
    <property type="match status" value="1"/>
</dbReference>
<organism>
    <name type="scientific">Saccharomyces cerevisiae (strain ATCC 204508 / S288c)</name>
    <name type="common">Baker's yeast</name>
    <dbReference type="NCBI Taxonomy" id="559292"/>
    <lineage>
        <taxon>Eukaryota</taxon>
        <taxon>Fungi</taxon>
        <taxon>Dikarya</taxon>
        <taxon>Ascomycota</taxon>
        <taxon>Saccharomycotina</taxon>
        <taxon>Saccharomycetes</taxon>
        <taxon>Saccharomycetales</taxon>
        <taxon>Saccharomycetaceae</taxon>
        <taxon>Saccharomyces</taxon>
    </lineage>
</organism>
<comment type="function">
    <text evidence="2 3 4 5 6 9 10 11 12">Component of the transcription coactivator SAGA complex. SAGA acts as a general cofactor required for essentially all RNA polymerase II transcription (PubMed:10864329, PubMed:25216679, PubMed:28918903). At the promoters, SAGA is required for transcription pre-initiation complex (PIC) recruitment. It influences RNA polymerase II transcriptional activity through different activities such as TBP interaction (via core/TAF module) and promoter selectivity, interaction with transcription activators (via Tra1/SPT module), and chromatin modification through histone acetylation (via HAT module) and deubiquitination (via DUB module) (PubMed:10048020, PubMed:31969703). SAGA preferentially acetylates histones H3 (to form H3K9ac, H3K14ac, H3K18ac and H3K23ac) and H2B and deubiquitinates histone H2B (PubMed:10026213). SAGA interacts with DNA via upstream activating sequences (UASs) (PubMed:28918903). Also identified in a modified version of SAGA named SALSA or SLIK (PubMed:12186975, PubMed:12446794). The cleavage of SPT7 and the absence of the SPT8 subunit in SLIK neither drive any major conformational differences in its structure compared with SAGA, nor significantly affect HAT, DUB, or DNA-binding activities (PubMed:33864814).</text>
</comment>
<comment type="subunit">
    <text evidence="5 6 8 9 11 12 13 14 15">Component of the 1.8 MDa SAGA (Spt-Ada-Gcn5 acetyltransferase) complex, which is composed of 19 subunits TRA1, SPT7, TAF5, NGG1/ADA3, SGF73, SPT20/ADA5, SPT8, TAF12, TAF6, HFI1/ADA1, UBP8, GCN5, ADA2, SPT3, SGF29, TAF10, TAF9, SGF11 and SUS1 (PubMed:31969703, PubMed:9674426, PubMed:9885573). The SAGA complex is composed of 4 modules, namely the HAT (histone acetyltransferase) module (GCN5, ADA2, NGG1/ADA3 and SGF29), the DUB (deubiquitinating) module (UBP8, SGF11, SGF73 and SUS1), the core or TAF (TBP-associated factor) module (TAF5, TAF6, TAF9, TAF10 and TAF12), and the Tra1 or SPT (Suppressor of Ty) module (TRA1, HFI1/ADA1, SPT3, SPT7, SPT8 and SPT20/ADA5). The Tra1/SPT module binds activators, the core module recruits TBP (TATA-binding protein), the HAT module contains the histone H3 acetyltransferase GCN5, and the DUB module comprises the histone H2B deubiquitinase UBP8 (PubMed:25216679, PubMed:31969703). Also identified in an altered form of SAGA, named SALSA (SAGA altered, Spt8 absent) or SLIK (SAGA-like) complex, which contains a C-terminal truncated form of SPT7 and is missing SPT8 (PubMed:12186975, PubMed:12446794, PubMed:15647753). However, it has been shown that the SAGA and SAGA-like SALSA/SLIK transcriptional coactivators are structurally and biochemically equivalent (PubMed:33864814). Component of an ADA/GCN5 complex that consists of HFI1/ADA1, ADA2, NGG1/ADA3, SPT20/ADA5 and GCN5 and probably is a subcomplex of SAGA (PubMed:9154821).</text>
</comment>
<comment type="interaction">
    <interactant intactId="EBI-8287">
        <id>Q12060</id>
    </interactant>
    <interactant intactId="EBI-2186">
        <id>Q02336</id>
        <label>ADA2</label>
    </interactant>
    <organismsDiffer>false</organismsDiffer>
    <experiments>26</experiments>
</comment>
<comment type="interaction">
    <interactant intactId="EBI-8287">
        <id>Q12060</id>
    </interactant>
    <interactant intactId="EBI-7458">
        <id>Q03330</id>
        <label>GCN5</label>
    </interactant>
    <organismsDiffer>false</organismsDiffer>
    <experiments>22</experiments>
</comment>
<comment type="interaction">
    <interactant intactId="EBI-8287">
        <id>Q12060</id>
    </interactant>
    <interactant intactId="EBI-2192">
        <id>P32494</id>
        <label>NGG1</label>
    </interactant>
    <organismsDiffer>false</organismsDiffer>
    <experiments>6</experiments>
</comment>
<comment type="interaction">
    <interactant intactId="EBI-8287">
        <id>Q12060</id>
    </interactant>
    <interactant intactId="EBI-21678">
        <id>P25554</id>
        <label>SGF29</label>
    </interactant>
    <organismsDiffer>false</organismsDiffer>
    <experiments>10</experiments>
</comment>
<comment type="interaction">
    <interactant intactId="EBI-8287">
        <id>Q12060</id>
    </interactant>
    <interactant intactId="EBI-17751">
        <id>P50875</id>
        <label>SPT20</label>
    </interactant>
    <organismsDiffer>false</organismsDiffer>
    <experiments>14</experiments>
</comment>
<comment type="interaction">
    <interactant intactId="EBI-8287">
        <id>Q12060</id>
    </interactant>
    <interactant intactId="EBI-17921">
        <id>P06844</id>
        <label>SPT3</label>
    </interactant>
    <organismsDiffer>false</organismsDiffer>
    <experiments>10</experiments>
</comment>
<comment type="interaction">
    <interactant intactId="EBI-8287">
        <id>Q12060</id>
    </interactant>
    <interactant intactId="EBI-17958">
        <id>P35177</id>
        <label>SPT7</label>
    </interactant>
    <organismsDiffer>false</organismsDiffer>
    <experiments>16</experiments>
</comment>
<comment type="interaction">
    <interactant intactId="EBI-8287">
        <id>Q12060</id>
    </interactant>
    <interactant intactId="EBI-17964">
        <id>P38915</id>
        <label>SPT8</label>
    </interactant>
    <organismsDiffer>false</organismsDiffer>
    <experiments>15</experiments>
</comment>
<comment type="interaction">
    <interactant intactId="EBI-8287">
        <id>Q12060</id>
    </interactant>
    <interactant intactId="EBI-18889">
        <id>Q12030</id>
        <label>TAF10</label>
    </interactant>
    <organismsDiffer>false</organismsDiffer>
    <experiments>8</experiments>
</comment>
<comment type="interaction">
    <interactant intactId="EBI-8287">
        <id>Q12060</id>
    </interactant>
    <interactant intactId="EBI-35097">
        <id>Q03761</id>
        <label>TAF12</label>
    </interactant>
    <organismsDiffer>false</organismsDiffer>
    <experiments>11</experiments>
</comment>
<comment type="interaction">
    <interactant intactId="EBI-8287">
        <id>Q12060</id>
    </interactant>
    <interactant intactId="EBI-18868">
        <id>P38129</id>
        <label>TAF5</label>
    </interactant>
    <organismsDiffer>false</organismsDiffer>
    <experiments>16</experiments>
</comment>
<comment type="interaction">
    <interactant intactId="EBI-8287">
        <id>Q12060</id>
    </interactant>
    <interactant intactId="EBI-18876">
        <id>P53040</id>
        <label>TAF6</label>
    </interactant>
    <organismsDiffer>false</organismsDiffer>
    <experiments>10</experiments>
</comment>
<comment type="interaction">
    <interactant intactId="EBI-8287">
        <id>Q12060</id>
    </interactant>
    <interactant intactId="EBI-24638">
        <id>P38811</id>
        <label>TRA1</label>
    </interactant>
    <organismsDiffer>false</organismsDiffer>
    <experiments>9</experiments>
</comment>
<comment type="interaction">
    <interactant intactId="EBI-8287">
        <id>Q12060</id>
    </interactant>
    <interactant intactId="EBI-19863">
        <id>P50102</id>
        <label>UBP8</label>
    </interactant>
    <organismsDiffer>false</organismsDiffer>
    <experiments>10</experiments>
</comment>
<comment type="subcellular location">
    <subcellularLocation>
        <location evidence="18">Nucleus</location>
    </subcellularLocation>
</comment>
<comment type="miscellaneous">
    <text evidence="7">Present with 7950 molecules/cell in log phase SD medium.</text>
</comment>
<accession>Q12060</accession>
<accession>D6W3B7</accession>
<accession>O00039</accession>
<accession>Q02813</accession>
<keyword id="KW-0002">3D-structure</keyword>
<keyword id="KW-0539">Nucleus</keyword>
<keyword id="KW-1185">Reference proteome</keyword>
<keyword id="KW-0804">Transcription</keyword>
<keyword id="KW-0805">Transcription regulation</keyword>
<feature type="chain" id="PRO_0000083959" description="SAGA complex subunit HFI1">
    <location>
        <begin position="1"/>
        <end position="488"/>
    </location>
</feature>
<feature type="region of interest" description="Disordered" evidence="1">
    <location>
        <begin position="1"/>
        <end position="58"/>
    </location>
</feature>
<feature type="region of interest" description="Disordered" evidence="1">
    <location>
        <begin position="352"/>
        <end position="383"/>
    </location>
</feature>
<feature type="compositionally biased region" description="Polar residues" evidence="1">
    <location>
        <begin position="37"/>
        <end position="58"/>
    </location>
</feature>
<feature type="sequence conflict" description="In Ref. 2; AAA84983." evidence="18" ref="2">
    <original>A</original>
    <variation>V</variation>
    <location>
        <position position="19"/>
    </location>
</feature>
<feature type="helix" evidence="21">
    <location>
        <begin position="184"/>
        <end position="187"/>
    </location>
</feature>
<feature type="strand" evidence="21">
    <location>
        <begin position="188"/>
        <end position="190"/>
    </location>
</feature>
<feature type="helix" evidence="21">
    <location>
        <begin position="192"/>
        <end position="198"/>
    </location>
</feature>
<feature type="helix" evidence="21">
    <location>
        <begin position="212"/>
        <end position="220"/>
    </location>
</feature>
<feature type="helix" evidence="21">
    <location>
        <begin position="230"/>
        <end position="238"/>
    </location>
</feature>
<feature type="helix" evidence="21">
    <location>
        <begin position="244"/>
        <end position="255"/>
    </location>
</feature>
<feature type="helix" evidence="21">
    <location>
        <begin position="260"/>
        <end position="263"/>
    </location>
</feature>
<feature type="helix" evidence="21">
    <location>
        <begin position="269"/>
        <end position="283"/>
    </location>
</feature>
<feature type="helix" evidence="21">
    <location>
        <begin position="293"/>
        <end position="316"/>
    </location>
</feature>
<feature type="strand" evidence="21">
    <location>
        <begin position="320"/>
        <end position="323"/>
    </location>
</feature>
<feature type="strand" evidence="21">
    <location>
        <begin position="335"/>
        <end position="337"/>
    </location>
</feature>
<feature type="helix" evidence="21">
    <location>
        <begin position="341"/>
        <end position="348"/>
    </location>
</feature>
<feature type="helix" evidence="21">
    <location>
        <begin position="350"/>
        <end position="352"/>
    </location>
</feature>
<feature type="helix" evidence="21">
    <location>
        <begin position="357"/>
        <end position="364"/>
    </location>
</feature>
<feature type="turn" evidence="21">
    <location>
        <begin position="384"/>
        <end position="386"/>
    </location>
</feature>
<feature type="strand" evidence="21">
    <location>
        <begin position="401"/>
        <end position="403"/>
    </location>
</feature>
<feature type="helix" evidence="21">
    <location>
        <begin position="408"/>
        <end position="417"/>
    </location>
</feature>
<sequence length="488" mass="54466">MSAIQSPAPKPLQPTYPAASPASTNAYMKPGLIGSPAVSNHTEPNNGNNETAEPQGPNQRIDLGAMIEELTSLLGKESWTKYAQIISLFILGKLSRKELSNELELVFSPSAASLEKSNTNHHHSLVRLHNQLLLGIFANSLRENPLGRNGNESSWGFGNGSNNPNNKLKRINKHNSQIEVYKKIVMSLPLNDRNRLKMITKEAGKRGFIFCSVFQARLNNIPKIPIVTNPESLKRVKSNNLKTPLEWSQDIMNGFNVPLASESHSLPDTDSFYLRMVGIAREHGLVGTVDARCVELISLALDQYLKNIIEFTIDTVRYRRKKYSDYYDLNESGLYKSVSEMAADKRDAKIKQLDDDKNEDECADEAKSINNGNNSSKDDIGDISMSSITKAGEAVNEELHENRTISLTNEDIYDSLSIFPNLVEPSGSYYALTNLGLVNDDELVDMKSNIDDLPDFLNEKPTFTPLDERNVGTRHELNWLIKGILTED</sequence>
<evidence type="ECO:0000256" key="1">
    <source>
        <dbReference type="SAM" id="MobiDB-lite"/>
    </source>
</evidence>
<evidence type="ECO:0000269" key="2">
    <source>
    </source>
</evidence>
<evidence type="ECO:0000269" key="3">
    <source>
    </source>
</evidence>
<evidence type="ECO:0000269" key="4">
    <source>
    </source>
</evidence>
<evidence type="ECO:0000269" key="5">
    <source>
    </source>
</evidence>
<evidence type="ECO:0000269" key="6">
    <source>
    </source>
</evidence>
<evidence type="ECO:0000269" key="7">
    <source>
    </source>
</evidence>
<evidence type="ECO:0000269" key="8">
    <source>
    </source>
</evidence>
<evidence type="ECO:0000269" key="9">
    <source>
    </source>
</evidence>
<evidence type="ECO:0000269" key="10">
    <source>
    </source>
</evidence>
<evidence type="ECO:0000269" key="11">
    <source>
    </source>
</evidence>
<evidence type="ECO:0000269" key="12">
    <source>
    </source>
</evidence>
<evidence type="ECO:0000269" key="13">
    <source>
    </source>
</evidence>
<evidence type="ECO:0000269" key="14">
    <source>
    </source>
</evidence>
<evidence type="ECO:0000269" key="15">
    <source>
    </source>
</evidence>
<evidence type="ECO:0000303" key="16">
    <source>
    </source>
</evidence>
<evidence type="ECO:0000303" key="17">
    <source>
    </source>
</evidence>
<evidence type="ECO:0000305" key="18"/>
<evidence type="ECO:0007744" key="19">
    <source>
        <dbReference type="PDB" id="6T9I"/>
    </source>
</evidence>
<evidence type="ECO:0007744" key="20">
    <source>
        <dbReference type="PDB" id="6T9K"/>
    </source>
</evidence>
<evidence type="ECO:0007829" key="21">
    <source>
        <dbReference type="PDB" id="6T9K"/>
    </source>
</evidence>
<reference key="1">
    <citation type="journal article" date="1997" name="Mol. Cell. Biol.">
        <title>ADA1, a novel component of the ADA/GCN5 complex, has broader effects than GCN5, ADA2, or ADA3.</title>
        <authorList>
            <person name="Horiuchi J."/>
            <person name="Silverman N."/>
            <person name="Pina B."/>
            <person name="Marcus G.A."/>
            <person name="Guarente L."/>
        </authorList>
    </citation>
    <scope>NUCLEOTIDE SEQUENCE [GENOMIC DNA]</scope>
    <scope>IDENTIFICATION IN THE ADA/GCN5 COMPLEX</scope>
    <source>
        <strain>ATCC MYA-3516 / BWG1-7A</strain>
    </source>
</reference>
<reference key="2">
    <citation type="submission" date="1996-01" db="EMBL/GenBank/DDBJ databases">
        <authorList>
            <person name="Brown N.G."/>
        </authorList>
    </citation>
    <scope>NUCLEOTIDE SEQUENCE [GENOMIC DNA]</scope>
</reference>
<reference key="3">
    <citation type="journal article" date="1997" name="Nature">
        <title>The nucleotide sequence of Saccharomyces cerevisiae chromosome XVI.</title>
        <authorList>
            <person name="Bussey H."/>
            <person name="Storms R.K."/>
            <person name="Ahmed A."/>
            <person name="Albermann K."/>
            <person name="Allen E."/>
            <person name="Ansorge W."/>
            <person name="Araujo R."/>
            <person name="Aparicio A."/>
            <person name="Barrell B.G."/>
            <person name="Badcock K."/>
            <person name="Benes V."/>
            <person name="Botstein D."/>
            <person name="Bowman S."/>
            <person name="Brueckner M."/>
            <person name="Carpenter J."/>
            <person name="Cherry J.M."/>
            <person name="Chung E."/>
            <person name="Churcher C.M."/>
            <person name="Coster F."/>
            <person name="Davis K."/>
            <person name="Davis R.W."/>
            <person name="Dietrich F.S."/>
            <person name="Delius H."/>
            <person name="DiPaolo T."/>
            <person name="Dubois E."/>
            <person name="Duesterhoeft A."/>
            <person name="Duncan M."/>
            <person name="Floeth M."/>
            <person name="Fortin N."/>
            <person name="Friesen J.D."/>
            <person name="Fritz C."/>
            <person name="Goffeau A."/>
            <person name="Hall J."/>
            <person name="Hebling U."/>
            <person name="Heumann K."/>
            <person name="Hilbert H."/>
            <person name="Hillier L.W."/>
            <person name="Hunicke-Smith S."/>
            <person name="Hyman R.W."/>
            <person name="Johnston M."/>
            <person name="Kalman S."/>
            <person name="Kleine K."/>
            <person name="Komp C."/>
            <person name="Kurdi O."/>
            <person name="Lashkari D."/>
            <person name="Lew H."/>
            <person name="Lin A."/>
            <person name="Lin D."/>
            <person name="Louis E.J."/>
            <person name="Marathe R."/>
            <person name="Messenguy F."/>
            <person name="Mewes H.-W."/>
            <person name="Mirtipati S."/>
            <person name="Moestl D."/>
            <person name="Mueller-Auer S."/>
            <person name="Namath A."/>
            <person name="Nentwich U."/>
            <person name="Oefner P."/>
            <person name="Pearson D."/>
            <person name="Petel F.X."/>
            <person name="Pohl T.M."/>
            <person name="Purnelle B."/>
            <person name="Rajandream M.A."/>
            <person name="Rechmann S."/>
            <person name="Rieger M."/>
            <person name="Riles L."/>
            <person name="Roberts D."/>
            <person name="Schaefer M."/>
            <person name="Scharfe M."/>
            <person name="Scherens B."/>
            <person name="Schramm S."/>
            <person name="Schroeder M."/>
            <person name="Sdicu A.-M."/>
            <person name="Tettelin H."/>
            <person name="Urrestarazu L.A."/>
            <person name="Ushinsky S."/>
            <person name="Vierendeels F."/>
            <person name="Vissers S."/>
            <person name="Voss H."/>
            <person name="Walsh S.V."/>
            <person name="Wambutt R."/>
            <person name="Wang Y."/>
            <person name="Wedler E."/>
            <person name="Wedler H."/>
            <person name="Winnett E."/>
            <person name="Zhong W.-W."/>
            <person name="Zollner A."/>
            <person name="Vo D.H."/>
            <person name="Hani J."/>
        </authorList>
    </citation>
    <scope>NUCLEOTIDE SEQUENCE [LARGE SCALE GENOMIC DNA]</scope>
    <source>
        <strain>ATCC 204508 / S288c</strain>
    </source>
</reference>
<reference key="4">
    <citation type="journal article" date="2014" name="G3 (Bethesda)">
        <title>The reference genome sequence of Saccharomyces cerevisiae: Then and now.</title>
        <authorList>
            <person name="Engel S.R."/>
            <person name="Dietrich F.S."/>
            <person name="Fisk D.G."/>
            <person name="Binkley G."/>
            <person name="Balakrishnan R."/>
            <person name="Costanzo M.C."/>
            <person name="Dwight S.S."/>
            <person name="Hitz B.C."/>
            <person name="Karra K."/>
            <person name="Nash R.S."/>
            <person name="Weng S."/>
            <person name="Wong E.D."/>
            <person name="Lloyd P."/>
            <person name="Skrzypek M.S."/>
            <person name="Miyasato S.R."/>
            <person name="Simison M."/>
            <person name="Cherry J.M."/>
        </authorList>
    </citation>
    <scope>GENOME REANNOTATION</scope>
    <source>
        <strain>ATCC 204508 / S288c</strain>
    </source>
</reference>
<reference key="5">
    <citation type="journal article" date="1998" name="Cell">
        <title>A subset of TAF(II)s are integral components of the SAGA complex required for nucleosome acetylation and transcriptional stimulation.</title>
        <authorList>
            <person name="Grant P.A."/>
            <person name="Schieltz D."/>
            <person name="Pray-Grant M.G."/>
            <person name="Steger D.J."/>
            <person name="Reese J.C."/>
            <person name="Yates J.R. III"/>
            <person name="Workman J.L."/>
        </authorList>
    </citation>
    <scope>IDENTIFICATION IN THE SAGA COMPLEX</scope>
    <scope>IDENTIFICATION BY MASS SPECTROMETRY</scope>
</reference>
<reference key="6">
    <citation type="journal article" date="1998" name="Mol. Cell">
        <title>The ATM-related cofactor Tra1 is a component of the purified SAGA complex.</title>
        <authorList>
            <person name="Grant P.A."/>
            <person name="Schieltz D."/>
            <person name="Pray-Grant M.G."/>
            <person name="Yates J.R. III"/>
            <person name="Workman J.L."/>
        </authorList>
    </citation>
    <scope>IDENTIFICATION IN A SAGA COMPLEX WITH SPT2; SPT7; SPT8; GCN5; SPT20; ADA2; ADA3 AND TRA1</scope>
</reference>
<reference key="7">
    <citation type="journal article" date="1999" name="J. Biol. Chem.">
        <title>Expanded lysine acetylation specificity of Gcn5 in native complexes.</title>
        <authorList>
            <person name="Grant P.A."/>
            <person name="Eberharter A."/>
            <person name="John S."/>
            <person name="Cook R.G."/>
            <person name="Turner B.M."/>
            <person name="Workman J.L."/>
        </authorList>
    </citation>
    <scope>FUNCTION IN HISTONE ACETYLATION AT THE SAGA COMPLEX</scope>
</reference>
<reference key="8">
    <citation type="journal article" date="1999" name="Mol. Microbiol.">
        <title>A co-activator of nitrogen-regulated transcription in Saccharomyces cerevisiae.</title>
        <authorList>
            <person name="Soussi-Boudekou S."/>
            <person name="Andre B."/>
        </authorList>
    </citation>
    <scope>FUNCTION</scope>
</reference>
<reference key="9">
    <citation type="journal article" date="2000" name="Nature">
        <title>Redundant roles for the TFIID and SAGA complexes in global transcription.</title>
        <authorList>
            <person name="Lee T.I."/>
            <person name="Causton H.C."/>
            <person name="Holstege F.C."/>
            <person name="Shen W.C."/>
            <person name="Hannett N."/>
            <person name="Jennings E.G."/>
            <person name="Winston F."/>
            <person name="Green M.R."/>
            <person name="Young R.A."/>
        </authorList>
    </citation>
    <scope>FUNCTION</scope>
</reference>
<reference key="10">
    <citation type="journal article" date="2002" name="Mol. Cell. Biol.">
        <title>The novel SLIK histone acetyltransferase complex functions in the yeast retrograde response pathway.</title>
        <authorList>
            <person name="Pray-Grant M.G."/>
            <person name="Schieltz D."/>
            <person name="McMahon S.J."/>
            <person name="Wood J.M."/>
            <person name="Kennedy E.L."/>
            <person name="Cook R.G."/>
            <person name="Workman J.L."/>
            <person name="Yates J.R. III"/>
            <person name="Grant P.A."/>
        </authorList>
    </citation>
    <scope>IDENTIFICATION IN THE SLIK COMPLEX</scope>
</reference>
<reference key="11">
    <citation type="journal article" date="2002" name="Proc. Natl. Acad. Sci. U.S.A.">
        <title>SALSA, a variant of yeast SAGA, contains truncated Spt7, which correlates with activated transcription.</title>
        <authorList>
            <person name="Sterner D.E."/>
            <person name="Belotserkovskaya R."/>
            <person name="Berger S.L."/>
        </authorList>
    </citation>
    <scope>IDENTIFICATION IN THE SALSA COMPLEX</scope>
</reference>
<reference key="12">
    <citation type="journal article" date="2003" name="Nature">
        <title>Global analysis of protein expression in yeast.</title>
        <authorList>
            <person name="Ghaemmaghami S."/>
            <person name="Huh W.-K."/>
            <person name="Bower K."/>
            <person name="Howson R.W."/>
            <person name="Belle A."/>
            <person name="Dephoure N."/>
            <person name="O'Shea E.K."/>
            <person name="Weissman J.S."/>
        </authorList>
    </citation>
    <scope>LEVEL OF PROTEIN EXPRESSION [LARGE SCALE ANALYSIS]</scope>
</reference>
<reference key="13">
    <citation type="journal article" date="2005" name="Nature">
        <title>Chd1 chromodomain links histone H3 methylation with SAGA- and SLIK-dependent acetylation.</title>
        <authorList>
            <person name="Pray-Grant M.G."/>
            <person name="Daniel J.A."/>
            <person name="Schieltz D."/>
            <person name="Yates J.R. III"/>
            <person name="Grant P.A."/>
        </authorList>
    </citation>
    <scope>IDENTIFICATION IN THE SLIK COMPLEX</scope>
</reference>
<reference key="14">
    <citation type="journal article" date="2008" name="Mol. Cell. Proteomics">
        <title>A multidimensional chromatography technology for in-depth phosphoproteome analysis.</title>
        <authorList>
            <person name="Albuquerque C.P."/>
            <person name="Smolka M.B."/>
            <person name="Payne S.H."/>
            <person name="Bafna V."/>
            <person name="Eng J."/>
            <person name="Zhou H."/>
        </authorList>
    </citation>
    <scope>IDENTIFICATION BY MASS SPECTROMETRY [LARGE SCALE ANALYSIS]</scope>
</reference>
<reference key="15">
    <citation type="journal article" date="2009" name="Science">
        <title>Global analysis of Cdk1 substrate phosphorylation sites provides insights into evolution.</title>
        <authorList>
            <person name="Holt L.J."/>
            <person name="Tuch B.B."/>
            <person name="Villen J."/>
            <person name="Johnson A.D."/>
            <person name="Gygi S.P."/>
            <person name="Morgan D.O."/>
        </authorList>
    </citation>
    <scope>IDENTIFICATION BY MASS SPECTROMETRY [LARGE SCALE ANALYSIS]</scope>
</reference>
<reference key="16">
    <citation type="journal article" date="2014" name="EMBO J.">
        <title>Architecture of the Saccharomyces cerevisiae SAGA transcription coactivator complex.</title>
        <authorList>
            <person name="Han Y."/>
            <person name="Luo J."/>
            <person name="Ranish J."/>
            <person name="Hahn S."/>
        </authorList>
    </citation>
    <scope>SUBUNIT</scope>
</reference>
<reference key="17">
    <citation type="journal article" date="2017" name="Mol. Cell">
        <title>SAGA is a general cofactor for RNA polymerase II transcription.</title>
        <authorList>
            <person name="Baptista T."/>
            <person name="Gruenberg S."/>
            <person name="Minoungou N."/>
            <person name="Koster M.J.E."/>
            <person name="Timmers H.T.M."/>
            <person name="Hahn S."/>
            <person name="Devys D."/>
            <person name="Tora L."/>
        </authorList>
    </citation>
    <scope>FUNCTION</scope>
</reference>
<reference key="18">
    <citation type="journal article" date="2021" name="J. Biol. Chem.">
        <title>SAGA and SAGA-like SLIK transcriptional coactivators are structurally and biochemically equivalent.</title>
        <authorList>
            <person name="Adamus K."/>
            <person name="Reboul C."/>
            <person name="Voss J."/>
            <person name="Huang C."/>
            <person name="Schittenhelm R.B."/>
            <person name="Le S.N."/>
            <person name="Ellisdon A.M."/>
            <person name="Elmlund H."/>
            <person name="Boudes M."/>
            <person name="Elmlund D."/>
        </authorList>
    </citation>
    <scope>FUNCTION</scope>
    <scope>SUBUNIT</scope>
</reference>
<reference key="19">
    <citation type="journal article" date="2004" name="Mol. Cell">
        <title>Molecular architecture of the S. cerevisiae SAGA complex.</title>
        <authorList>
            <person name="Wu P.Y."/>
            <person name="Ruhlmann C."/>
            <person name="Winston F."/>
            <person name="Schultz P."/>
        </authorList>
    </citation>
    <scope>3D-STRUCTURE MODELING OF THE SAGA COMPLEX</scope>
</reference>
<reference evidence="19 20" key="20">
    <citation type="journal article" date="2020" name="Nature">
        <title>Structure of the transcription coactivator SAGA.</title>
        <authorList>
            <person name="Wang H."/>
            <person name="Dienemann C."/>
            <person name="Stutzer A."/>
            <person name="Urlaub H."/>
            <person name="Cheung A.C.M."/>
            <person name="Cramer P."/>
        </authorList>
    </citation>
    <scope>STRUCTURE BY ELECTRON MICROSCOPY (3.30 ANGSTROMS) IN THE SAGA COMPLEX</scope>
</reference>
<gene>
    <name type="primary">HFI1</name>
    <name evidence="17" type="synonym">ADA1</name>
    <name evidence="16" type="synonym">GAN1</name>
    <name type="synonym">SUP110</name>
    <name type="ordered locus">YPL254W</name>
</gene>